<comment type="function">
    <text evidence="1">Catalyzes the conversion of dethiobiotin (DTB) to biotin by the insertion of a sulfur atom into dethiobiotin via a radical-based mechanism.</text>
</comment>
<comment type="catalytic activity">
    <reaction evidence="1">
        <text>(4R,5S)-dethiobiotin + (sulfur carrier)-SH + 2 reduced [2Fe-2S]-[ferredoxin] + 2 S-adenosyl-L-methionine = (sulfur carrier)-H + biotin + 2 5'-deoxyadenosine + 2 L-methionine + 2 oxidized [2Fe-2S]-[ferredoxin]</text>
        <dbReference type="Rhea" id="RHEA:22060"/>
        <dbReference type="Rhea" id="RHEA-COMP:10000"/>
        <dbReference type="Rhea" id="RHEA-COMP:10001"/>
        <dbReference type="Rhea" id="RHEA-COMP:14737"/>
        <dbReference type="Rhea" id="RHEA-COMP:14739"/>
        <dbReference type="ChEBI" id="CHEBI:17319"/>
        <dbReference type="ChEBI" id="CHEBI:29917"/>
        <dbReference type="ChEBI" id="CHEBI:33737"/>
        <dbReference type="ChEBI" id="CHEBI:33738"/>
        <dbReference type="ChEBI" id="CHEBI:57586"/>
        <dbReference type="ChEBI" id="CHEBI:57844"/>
        <dbReference type="ChEBI" id="CHEBI:59789"/>
        <dbReference type="ChEBI" id="CHEBI:64428"/>
        <dbReference type="ChEBI" id="CHEBI:149473"/>
        <dbReference type="EC" id="2.8.1.6"/>
    </reaction>
</comment>
<comment type="cofactor">
    <cofactor evidence="1">
        <name>[4Fe-4S] cluster</name>
        <dbReference type="ChEBI" id="CHEBI:49883"/>
    </cofactor>
    <text evidence="1">Binds 1 [4Fe-4S] cluster. The cluster is coordinated with 3 cysteines and an exchangeable S-adenosyl-L-methionine.</text>
</comment>
<comment type="cofactor">
    <cofactor evidence="1">
        <name>[2Fe-2S] cluster</name>
        <dbReference type="ChEBI" id="CHEBI:190135"/>
    </cofactor>
    <text evidence="1">Binds 1 [2Fe-2S] cluster. The cluster is coordinated with 3 cysteines and 1 arginine.</text>
</comment>
<comment type="pathway">
    <text evidence="1">Cofactor biosynthesis; biotin biosynthesis; biotin from 7,8-diaminononanoate: step 2/2.</text>
</comment>
<comment type="subunit">
    <text evidence="1">Homodimer.</text>
</comment>
<comment type="similarity">
    <text evidence="1">Belongs to the radical SAM superfamily. Biotin synthase family.</text>
</comment>
<evidence type="ECO:0000255" key="1">
    <source>
        <dbReference type="HAMAP-Rule" id="MF_01694"/>
    </source>
</evidence>
<evidence type="ECO:0000255" key="2">
    <source>
        <dbReference type="PROSITE-ProRule" id="PRU01266"/>
    </source>
</evidence>
<name>BIOB_CAMJ8</name>
<keyword id="KW-0001">2Fe-2S</keyword>
<keyword id="KW-0004">4Fe-4S</keyword>
<keyword id="KW-0093">Biotin biosynthesis</keyword>
<keyword id="KW-0408">Iron</keyword>
<keyword id="KW-0411">Iron-sulfur</keyword>
<keyword id="KW-0479">Metal-binding</keyword>
<keyword id="KW-0949">S-adenosyl-L-methionine</keyword>
<keyword id="KW-0808">Transferase</keyword>
<feature type="chain" id="PRO_0000381284" description="Biotin synthase">
    <location>
        <begin position="1"/>
        <end position="278"/>
    </location>
</feature>
<feature type="domain" description="Radical SAM core" evidence="2">
    <location>
        <begin position="1"/>
        <end position="227"/>
    </location>
</feature>
<feature type="binding site" evidence="1">
    <location>
        <position position="16"/>
    </location>
    <ligand>
        <name>[4Fe-4S] cluster</name>
        <dbReference type="ChEBI" id="CHEBI:49883"/>
        <note>4Fe-4S-S-AdoMet</note>
    </ligand>
</feature>
<feature type="binding site" evidence="1">
    <location>
        <position position="20"/>
    </location>
    <ligand>
        <name>[4Fe-4S] cluster</name>
        <dbReference type="ChEBI" id="CHEBI:49883"/>
        <note>4Fe-4S-S-AdoMet</note>
    </ligand>
</feature>
<feature type="binding site" evidence="1">
    <location>
        <position position="23"/>
    </location>
    <ligand>
        <name>[4Fe-4S] cluster</name>
        <dbReference type="ChEBI" id="CHEBI:49883"/>
        <note>4Fe-4S-S-AdoMet</note>
    </ligand>
</feature>
<feature type="binding site" evidence="1">
    <location>
        <position position="60"/>
    </location>
    <ligand>
        <name>[2Fe-2S] cluster</name>
        <dbReference type="ChEBI" id="CHEBI:190135"/>
    </ligand>
</feature>
<feature type="binding site" evidence="1">
    <location>
        <position position="95"/>
    </location>
    <ligand>
        <name>[2Fe-2S] cluster</name>
        <dbReference type="ChEBI" id="CHEBI:190135"/>
    </ligand>
</feature>
<feature type="binding site" evidence="1">
    <location>
        <position position="153"/>
    </location>
    <ligand>
        <name>[2Fe-2S] cluster</name>
        <dbReference type="ChEBI" id="CHEBI:190135"/>
    </ligand>
</feature>
<protein>
    <recommendedName>
        <fullName evidence="1">Biotin synthase</fullName>
        <ecNumber evidence="1">2.8.1.6</ecNumber>
    </recommendedName>
</protein>
<organism>
    <name type="scientific">Campylobacter jejuni subsp. jejuni serotype O:6 (strain 81116 / NCTC 11828)</name>
    <dbReference type="NCBI Taxonomy" id="407148"/>
    <lineage>
        <taxon>Bacteria</taxon>
        <taxon>Pseudomonadati</taxon>
        <taxon>Campylobacterota</taxon>
        <taxon>Epsilonproteobacteria</taxon>
        <taxon>Campylobacterales</taxon>
        <taxon>Campylobacteraceae</taxon>
        <taxon>Campylobacter</taxon>
    </lineage>
</organism>
<dbReference type="EC" id="2.8.1.6" evidence="1"/>
<dbReference type="EMBL" id="CP000814">
    <property type="protein sequence ID" value="ABV53179.1"/>
    <property type="molecule type" value="Genomic_DNA"/>
</dbReference>
<dbReference type="RefSeq" id="WP_002866830.1">
    <property type="nucleotide sequence ID" value="NC_009839.1"/>
</dbReference>
<dbReference type="SMR" id="A8FNZ2"/>
<dbReference type="KEGG" id="cju:C8J_1582"/>
<dbReference type="HOGENOM" id="CLU_033172_2_1_7"/>
<dbReference type="UniPathway" id="UPA00078">
    <property type="reaction ID" value="UER00162"/>
</dbReference>
<dbReference type="GO" id="GO:0051537">
    <property type="term" value="F:2 iron, 2 sulfur cluster binding"/>
    <property type="evidence" value="ECO:0007669"/>
    <property type="project" value="UniProtKB-KW"/>
</dbReference>
<dbReference type="GO" id="GO:0051539">
    <property type="term" value="F:4 iron, 4 sulfur cluster binding"/>
    <property type="evidence" value="ECO:0007669"/>
    <property type="project" value="UniProtKB-KW"/>
</dbReference>
<dbReference type="GO" id="GO:0004076">
    <property type="term" value="F:biotin synthase activity"/>
    <property type="evidence" value="ECO:0007669"/>
    <property type="project" value="UniProtKB-UniRule"/>
</dbReference>
<dbReference type="GO" id="GO:0005506">
    <property type="term" value="F:iron ion binding"/>
    <property type="evidence" value="ECO:0007669"/>
    <property type="project" value="UniProtKB-UniRule"/>
</dbReference>
<dbReference type="GO" id="GO:0009102">
    <property type="term" value="P:biotin biosynthetic process"/>
    <property type="evidence" value="ECO:0007669"/>
    <property type="project" value="UniProtKB-UniRule"/>
</dbReference>
<dbReference type="CDD" id="cd01335">
    <property type="entry name" value="Radical_SAM"/>
    <property type="match status" value="1"/>
</dbReference>
<dbReference type="Gene3D" id="3.20.20.70">
    <property type="entry name" value="Aldolase class I"/>
    <property type="match status" value="1"/>
</dbReference>
<dbReference type="HAMAP" id="MF_01694">
    <property type="entry name" value="BioB"/>
    <property type="match status" value="1"/>
</dbReference>
<dbReference type="InterPro" id="IPR013785">
    <property type="entry name" value="Aldolase_TIM"/>
</dbReference>
<dbReference type="InterPro" id="IPR010722">
    <property type="entry name" value="BATS_dom"/>
</dbReference>
<dbReference type="InterPro" id="IPR002684">
    <property type="entry name" value="Biotin_synth/BioAB"/>
</dbReference>
<dbReference type="InterPro" id="IPR024177">
    <property type="entry name" value="Biotin_synthase"/>
</dbReference>
<dbReference type="InterPro" id="IPR006638">
    <property type="entry name" value="Elp3/MiaA/NifB-like_rSAM"/>
</dbReference>
<dbReference type="InterPro" id="IPR007197">
    <property type="entry name" value="rSAM"/>
</dbReference>
<dbReference type="NCBIfam" id="TIGR00433">
    <property type="entry name" value="bioB"/>
    <property type="match status" value="1"/>
</dbReference>
<dbReference type="NCBIfam" id="NF006308">
    <property type="entry name" value="PRK08508.1"/>
    <property type="match status" value="1"/>
</dbReference>
<dbReference type="PANTHER" id="PTHR22976">
    <property type="entry name" value="BIOTIN SYNTHASE"/>
    <property type="match status" value="1"/>
</dbReference>
<dbReference type="PANTHER" id="PTHR22976:SF2">
    <property type="entry name" value="BIOTIN SYNTHASE, MITOCHONDRIAL"/>
    <property type="match status" value="1"/>
</dbReference>
<dbReference type="Pfam" id="PF06968">
    <property type="entry name" value="BATS"/>
    <property type="match status" value="1"/>
</dbReference>
<dbReference type="Pfam" id="PF04055">
    <property type="entry name" value="Radical_SAM"/>
    <property type="match status" value="1"/>
</dbReference>
<dbReference type="PIRSF" id="PIRSF001619">
    <property type="entry name" value="Biotin_synth"/>
    <property type="match status" value="1"/>
</dbReference>
<dbReference type="SFLD" id="SFLDG01278">
    <property type="entry name" value="biotin_synthase_like"/>
    <property type="match status" value="1"/>
</dbReference>
<dbReference type="SFLD" id="SFLDS00029">
    <property type="entry name" value="Radical_SAM"/>
    <property type="match status" value="1"/>
</dbReference>
<dbReference type="SMART" id="SM00876">
    <property type="entry name" value="BATS"/>
    <property type="match status" value="1"/>
</dbReference>
<dbReference type="SMART" id="SM00729">
    <property type="entry name" value="Elp3"/>
    <property type="match status" value="1"/>
</dbReference>
<dbReference type="SUPFAM" id="SSF102114">
    <property type="entry name" value="Radical SAM enzymes"/>
    <property type="match status" value="1"/>
</dbReference>
<dbReference type="PROSITE" id="PS51918">
    <property type="entry name" value="RADICAL_SAM"/>
    <property type="match status" value="1"/>
</dbReference>
<reference key="1">
    <citation type="journal article" date="2007" name="J. Bacteriol.">
        <title>The complete genome sequence of Campylobacter jejuni strain 81116 (NCTC11828).</title>
        <authorList>
            <person name="Pearson B.M."/>
            <person name="Gaskin D.J.H."/>
            <person name="Segers R.P.A.M."/>
            <person name="Wells J.M."/>
            <person name="Nuijten P.J.M."/>
            <person name="van Vliet A.H.M."/>
        </authorList>
    </citation>
    <scope>NUCLEOTIDE SEQUENCE [LARGE SCALE GENOMIC DNA]</scope>
    <source>
        <strain>81116 / NCTC 11828</strain>
    </source>
</reference>
<sequence>MQIMLCAISNIASGNCSEDCKYCTQSAHVKTDIQKYRRKELSQIVLEAKMAKKNEALGFCLVTAGLGLDDEKLEYVCEAAKAVQKEVPNLLLIACNGMASVEQLKELKKAGIFSYNHNLETSKEFFPQICTTHTWESRFQTNLNAKEAGLMLCCGGIYGMGESEEDRLSFRKSLQELQPFSTPINFFIANENLKLQVPRLSADEALKIVRDTKEALPQSVVMVAGGREVVLQERQYEIFQAGAGAIVIGDYLTTKGEEPSQDIIKLKEMGFTFASECH</sequence>
<proteinExistence type="inferred from homology"/>
<accession>A8FNZ2</accession>
<gene>
    <name evidence="1" type="primary">bioB</name>
    <name type="ordered locus">C8J_1582</name>
</gene>